<accession>Q8ZJL7</accession>
<accession>Q0WKL7</accession>
<accession>Q74Y85</accession>
<accession>Q7CLC4</accession>
<evidence type="ECO:0000255" key="1">
    <source>
        <dbReference type="HAMAP-Rule" id="MF_01425"/>
    </source>
</evidence>
<comment type="function">
    <text evidence="1">Divalent metal cation transporter which exports Zn(2+), Cd(2+) and possibly Fe(2+). May be involved in zinc and iron detoxification by efflux.</text>
</comment>
<comment type="catalytic activity">
    <reaction evidence="1">
        <text>Zn(2+)(in) + H(+)(out) = Zn(2+)(out) + H(+)(in)</text>
        <dbReference type="Rhea" id="RHEA:28839"/>
        <dbReference type="ChEBI" id="CHEBI:15378"/>
        <dbReference type="ChEBI" id="CHEBI:29105"/>
    </reaction>
</comment>
<comment type="catalytic activity">
    <reaction evidence="1">
        <text>Cd(2+)(in) + H(+)(out) = Cd(2+)(out) + H(+)(in)</text>
        <dbReference type="Rhea" id="RHEA:28739"/>
        <dbReference type="ChEBI" id="CHEBI:15378"/>
        <dbReference type="ChEBI" id="CHEBI:48775"/>
    </reaction>
</comment>
<comment type="catalytic activity">
    <reaction evidence="1">
        <text>Fe(2+)(in) + H(+)(out) = Fe(2+)(out) + H(+)(in)</text>
        <dbReference type="Rhea" id="RHEA:29439"/>
        <dbReference type="ChEBI" id="CHEBI:15378"/>
        <dbReference type="ChEBI" id="CHEBI:29033"/>
    </reaction>
</comment>
<comment type="subunit">
    <text evidence="1">Homodimer.</text>
</comment>
<comment type="subcellular location">
    <subcellularLocation>
        <location evidence="1">Cell inner membrane</location>
        <topology evidence="1">Multi-pass membrane protein</topology>
    </subcellularLocation>
</comment>
<comment type="similarity">
    <text evidence="1">Belongs to the cation diffusion facilitator (CDF) transporter (TC 2.A.4) family. FieF subfamily.</text>
</comment>
<protein>
    <recommendedName>
        <fullName evidence="1">Cation-efflux pump FieF</fullName>
    </recommendedName>
</protein>
<proteinExistence type="inferred from homology"/>
<sequence length="300" mass="33396">MDPQYARWVKAAALSATALASILLIIKIFAWWHTGSVSLLAALVDSLVDLAASLTNLFVVRYSLQPADEEHTFGHGKAESLAALAQSMFISGSALFLFLTGFRHLASPEPLQDPSIGIGVTLVALFSTLILVTFQRWVVRKTHSQAIRADMLHYQSDVLMNGAILIALALSWYGFRRADALFALGIGVYILYSALRMGYEAVQSLLDRALPDDERQQIIDIVTSWPGVIGAHDLRTRRSGQTRFIQLHLEMEDMMPLMEAHVLAEQVEHALLYRFPGADVLIHQDPCSVVPKERHAHWEL</sequence>
<name>FIEF_YERPE</name>
<organism>
    <name type="scientific">Yersinia pestis</name>
    <dbReference type="NCBI Taxonomy" id="632"/>
    <lineage>
        <taxon>Bacteria</taxon>
        <taxon>Pseudomonadati</taxon>
        <taxon>Pseudomonadota</taxon>
        <taxon>Gammaproteobacteria</taxon>
        <taxon>Enterobacterales</taxon>
        <taxon>Yersiniaceae</taxon>
        <taxon>Yersinia</taxon>
    </lineage>
</organism>
<dbReference type="EMBL" id="AL590842">
    <property type="protein sequence ID" value="CAL18766.1"/>
    <property type="molecule type" value="Genomic_DNA"/>
</dbReference>
<dbReference type="EMBL" id="AE009952">
    <property type="protein sequence ID" value="AAM83655.1"/>
    <property type="molecule type" value="Genomic_DNA"/>
</dbReference>
<dbReference type="EMBL" id="AE017042">
    <property type="protein sequence ID" value="AAS60359.1"/>
    <property type="molecule type" value="Genomic_DNA"/>
</dbReference>
<dbReference type="PIR" id="AE0010">
    <property type="entry name" value="AE0010"/>
</dbReference>
<dbReference type="RefSeq" id="WP_002208967.1">
    <property type="nucleotide sequence ID" value="NZ_WUCM01000015.1"/>
</dbReference>
<dbReference type="RefSeq" id="YP_002345171.1">
    <property type="nucleotide sequence ID" value="NC_003143.1"/>
</dbReference>
<dbReference type="SMR" id="Q8ZJL7"/>
<dbReference type="IntAct" id="Q8ZJL7">
    <property type="interactions" value="5"/>
</dbReference>
<dbReference type="STRING" id="214092.YPO0077"/>
<dbReference type="PaxDb" id="214092-YPO0077"/>
<dbReference type="DNASU" id="1145007"/>
<dbReference type="EnsemblBacteria" id="AAS60359">
    <property type="protein sequence ID" value="AAS60359"/>
    <property type="gene ID" value="YP_0079"/>
</dbReference>
<dbReference type="GeneID" id="57974515"/>
<dbReference type="KEGG" id="ype:YPO0077"/>
<dbReference type="KEGG" id="ypk:y0060"/>
<dbReference type="KEGG" id="ypm:YP_0079"/>
<dbReference type="PATRIC" id="fig|214092.21.peg.302"/>
<dbReference type="eggNOG" id="COG0053">
    <property type="taxonomic scope" value="Bacteria"/>
</dbReference>
<dbReference type="HOGENOM" id="CLU_013430_3_0_6"/>
<dbReference type="OMA" id="HDYGPGR"/>
<dbReference type="OrthoDB" id="9806522at2"/>
<dbReference type="Proteomes" id="UP000000815">
    <property type="component" value="Chromosome"/>
</dbReference>
<dbReference type="Proteomes" id="UP000001019">
    <property type="component" value="Chromosome"/>
</dbReference>
<dbReference type="Proteomes" id="UP000002490">
    <property type="component" value="Chromosome"/>
</dbReference>
<dbReference type="GO" id="GO:0005886">
    <property type="term" value="C:plasma membrane"/>
    <property type="evidence" value="ECO:0000318"/>
    <property type="project" value="GO_Central"/>
</dbReference>
<dbReference type="GO" id="GO:0015086">
    <property type="term" value="F:cadmium ion transmembrane transporter activity"/>
    <property type="evidence" value="ECO:0000318"/>
    <property type="project" value="GO_Central"/>
</dbReference>
<dbReference type="GO" id="GO:0015093">
    <property type="term" value="F:ferrous iron transmembrane transporter activity"/>
    <property type="evidence" value="ECO:0000318"/>
    <property type="project" value="GO_Central"/>
</dbReference>
<dbReference type="GO" id="GO:0046872">
    <property type="term" value="F:metal ion binding"/>
    <property type="evidence" value="ECO:0007669"/>
    <property type="project" value="UniProtKB-KW"/>
</dbReference>
<dbReference type="GO" id="GO:0015341">
    <property type="term" value="F:zinc efflux antiporter activity"/>
    <property type="evidence" value="ECO:0000318"/>
    <property type="project" value="GO_Central"/>
</dbReference>
<dbReference type="GO" id="GO:0006882">
    <property type="term" value="P:intracellular zinc ion homeostasis"/>
    <property type="evidence" value="ECO:0000318"/>
    <property type="project" value="GO_Central"/>
</dbReference>
<dbReference type="FunFam" id="1.20.1510.10:FF:000001">
    <property type="entry name" value="Ferrous-iron efflux pump FieF"/>
    <property type="match status" value="1"/>
</dbReference>
<dbReference type="FunFam" id="3.30.70.1350:FF:000002">
    <property type="entry name" value="Ferrous-iron efflux pump FieF"/>
    <property type="match status" value="1"/>
</dbReference>
<dbReference type="Gene3D" id="1.20.1510.10">
    <property type="entry name" value="Cation efflux protein transmembrane domain"/>
    <property type="match status" value="1"/>
</dbReference>
<dbReference type="Gene3D" id="3.30.70.1350">
    <property type="entry name" value="Cation efflux protein, cytoplasmic domain"/>
    <property type="match status" value="1"/>
</dbReference>
<dbReference type="HAMAP" id="MF_01425">
    <property type="entry name" value="Cation_efflux_FieF"/>
    <property type="match status" value="1"/>
</dbReference>
<dbReference type="InterPro" id="IPR002524">
    <property type="entry name" value="Cation_efflux"/>
</dbReference>
<dbReference type="InterPro" id="IPR027470">
    <property type="entry name" value="Cation_efflux_CTD"/>
</dbReference>
<dbReference type="InterPro" id="IPR036837">
    <property type="entry name" value="Cation_efflux_CTD_sf"/>
</dbReference>
<dbReference type="InterPro" id="IPR023783">
    <property type="entry name" value="Cation_efflux_FieF"/>
</dbReference>
<dbReference type="InterPro" id="IPR027469">
    <property type="entry name" value="Cation_efflux_TMD_sf"/>
</dbReference>
<dbReference type="InterPro" id="IPR050291">
    <property type="entry name" value="CDF_Transporter"/>
</dbReference>
<dbReference type="NCBIfam" id="TIGR01297">
    <property type="entry name" value="CDF"/>
    <property type="match status" value="1"/>
</dbReference>
<dbReference type="NCBIfam" id="NF007064">
    <property type="entry name" value="PRK09509.1"/>
    <property type="match status" value="1"/>
</dbReference>
<dbReference type="PANTHER" id="PTHR43840:SF41">
    <property type="entry name" value="CATION-EFFLUX PUMP FIEF"/>
    <property type="match status" value="1"/>
</dbReference>
<dbReference type="PANTHER" id="PTHR43840">
    <property type="entry name" value="MITOCHONDRIAL METAL TRANSPORTER 1-RELATED"/>
    <property type="match status" value="1"/>
</dbReference>
<dbReference type="Pfam" id="PF01545">
    <property type="entry name" value="Cation_efflux"/>
    <property type="match status" value="1"/>
</dbReference>
<dbReference type="Pfam" id="PF16916">
    <property type="entry name" value="ZT_dimer"/>
    <property type="match status" value="1"/>
</dbReference>
<dbReference type="SUPFAM" id="SSF160240">
    <property type="entry name" value="Cation efflux protein cytoplasmic domain-like"/>
    <property type="match status" value="1"/>
</dbReference>
<dbReference type="SUPFAM" id="SSF161111">
    <property type="entry name" value="Cation efflux protein transmembrane domain-like"/>
    <property type="match status" value="1"/>
</dbReference>
<feature type="chain" id="PRO_0000206133" description="Cation-efflux pump FieF">
    <location>
        <begin position="1"/>
        <end position="300"/>
    </location>
</feature>
<feature type="transmembrane region" description="Helical" evidence="1">
    <location>
        <begin position="12"/>
        <end position="32"/>
    </location>
</feature>
<feature type="transmembrane region" description="Helical" evidence="1">
    <location>
        <begin position="40"/>
        <end position="60"/>
    </location>
</feature>
<feature type="transmembrane region" description="Helical" evidence="1">
    <location>
        <begin position="82"/>
        <end position="102"/>
    </location>
</feature>
<feature type="transmembrane region" description="Helical" evidence="1">
    <location>
        <begin position="114"/>
        <end position="134"/>
    </location>
</feature>
<feature type="transmembrane region" description="Helical" evidence="1">
    <location>
        <begin position="155"/>
        <end position="175"/>
    </location>
</feature>
<feature type="transmembrane region" description="Helical" evidence="1">
    <location>
        <begin position="178"/>
        <end position="198"/>
    </location>
</feature>
<feature type="binding site" evidence="1">
    <location>
        <position position="45"/>
    </location>
    <ligand>
        <name>Zn(2+)</name>
        <dbReference type="ChEBI" id="CHEBI:29105"/>
    </ligand>
</feature>
<feature type="binding site" evidence="1">
    <location>
        <position position="49"/>
    </location>
    <ligand>
        <name>Zn(2+)</name>
        <dbReference type="ChEBI" id="CHEBI:29105"/>
    </ligand>
</feature>
<feature type="binding site" evidence="1">
    <location>
        <position position="153"/>
    </location>
    <ligand>
        <name>Zn(2+)</name>
        <dbReference type="ChEBI" id="CHEBI:29105"/>
    </ligand>
</feature>
<feature type="binding site" evidence="1">
    <location>
        <position position="157"/>
    </location>
    <ligand>
        <name>Zn(2+)</name>
        <dbReference type="ChEBI" id="CHEBI:29105"/>
    </ligand>
</feature>
<keyword id="KW-0997">Cell inner membrane</keyword>
<keyword id="KW-1003">Cell membrane</keyword>
<keyword id="KW-0406">Ion transport</keyword>
<keyword id="KW-0408">Iron</keyword>
<keyword id="KW-0410">Iron transport</keyword>
<keyword id="KW-0472">Membrane</keyword>
<keyword id="KW-0479">Metal-binding</keyword>
<keyword id="KW-1185">Reference proteome</keyword>
<keyword id="KW-0812">Transmembrane</keyword>
<keyword id="KW-1133">Transmembrane helix</keyword>
<keyword id="KW-0813">Transport</keyword>
<keyword id="KW-0862">Zinc</keyword>
<keyword id="KW-0864">Zinc transport</keyword>
<reference key="1">
    <citation type="journal article" date="2001" name="Nature">
        <title>Genome sequence of Yersinia pestis, the causative agent of plague.</title>
        <authorList>
            <person name="Parkhill J."/>
            <person name="Wren B.W."/>
            <person name="Thomson N.R."/>
            <person name="Titball R.W."/>
            <person name="Holden M.T.G."/>
            <person name="Prentice M.B."/>
            <person name="Sebaihia M."/>
            <person name="James K.D."/>
            <person name="Churcher C.M."/>
            <person name="Mungall K.L."/>
            <person name="Baker S."/>
            <person name="Basham D."/>
            <person name="Bentley S.D."/>
            <person name="Brooks K."/>
            <person name="Cerdeno-Tarraga A.-M."/>
            <person name="Chillingworth T."/>
            <person name="Cronin A."/>
            <person name="Davies R.M."/>
            <person name="Davis P."/>
            <person name="Dougan G."/>
            <person name="Feltwell T."/>
            <person name="Hamlin N."/>
            <person name="Holroyd S."/>
            <person name="Jagels K."/>
            <person name="Karlyshev A.V."/>
            <person name="Leather S."/>
            <person name="Moule S."/>
            <person name="Oyston P.C.F."/>
            <person name="Quail M.A."/>
            <person name="Rutherford K.M."/>
            <person name="Simmonds M."/>
            <person name="Skelton J."/>
            <person name="Stevens K."/>
            <person name="Whitehead S."/>
            <person name="Barrell B.G."/>
        </authorList>
    </citation>
    <scope>NUCLEOTIDE SEQUENCE [LARGE SCALE GENOMIC DNA]</scope>
    <source>
        <strain>CO-92 / Biovar Orientalis</strain>
    </source>
</reference>
<reference key="2">
    <citation type="journal article" date="2002" name="J. Bacteriol.">
        <title>Genome sequence of Yersinia pestis KIM.</title>
        <authorList>
            <person name="Deng W."/>
            <person name="Burland V."/>
            <person name="Plunkett G. III"/>
            <person name="Boutin A."/>
            <person name="Mayhew G.F."/>
            <person name="Liss P."/>
            <person name="Perna N.T."/>
            <person name="Rose D.J."/>
            <person name="Mau B."/>
            <person name="Zhou S."/>
            <person name="Schwartz D.C."/>
            <person name="Fetherston J.D."/>
            <person name="Lindler L.E."/>
            <person name="Brubaker R.R."/>
            <person name="Plano G.V."/>
            <person name="Straley S.C."/>
            <person name="McDonough K.A."/>
            <person name="Nilles M.L."/>
            <person name="Matson J.S."/>
            <person name="Blattner F.R."/>
            <person name="Perry R.D."/>
        </authorList>
    </citation>
    <scope>NUCLEOTIDE SEQUENCE [LARGE SCALE GENOMIC DNA]</scope>
    <source>
        <strain>KIM10+ / Biovar Mediaevalis</strain>
    </source>
</reference>
<reference key="3">
    <citation type="journal article" date="2004" name="DNA Res.">
        <title>Complete genome sequence of Yersinia pestis strain 91001, an isolate avirulent to humans.</title>
        <authorList>
            <person name="Song Y."/>
            <person name="Tong Z."/>
            <person name="Wang J."/>
            <person name="Wang L."/>
            <person name="Guo Z."/>
            <person name="Han Y."/>
            <person name="Zhang J."/>
            <person name="Pei D."/>
            <person name="Zhou D."/>
            <person name="Qin H."/>
            <person name="Pang X."/>
            <person name="Han Y."/>
            <person name="Zhai J."/>
            <person name="Li M."/>
            <person name="Cui B."/>
            <person name="Qi Z."/>
            <person name="Jin L."/>
            <person name="Dai R."/>
            <person name="Chen F."/>
            <person name="Li S."/>
            <person name="Ye C."/>
            <person name="Du Z."/>
            <person name="Lin W."/>
            <person name="Wang J."/>
            <person name="Yu J."/>
            <person name="Yang H."/>
            <person name="Wang J."/>
            <person name="Huang P."/>
            <person name="Yang R."/>
        </authorList>
    </citation>
    <scope>NUCLEOTIDE SEQUENCE [LARGE SCALE GENOMIC DNA]</scope>
    <source>
        <strain>91001 / Biovar Mediaevalis</strain>
    </source>
</reference>
<gene>
    <name evidence="1" type="primary">fieF</name>
    <name type="ordered locus">YPO0077</name>
    <name type="ordered locus">y0060</name>
    <name type="ordered locus">YP_0079</name>
</gene>